<reference key="1">
    <citation type="journal article" date="2000" name="Mol. Biol. Cell">
        <title>A pcl-like cyclin activates the Res2p-Cdc10p cell cycle 'start' transcriptional factor complex in fission yeast.</title>
        <authorList>
            <person name="Tanaka K."/>
            <person name="Okayama H."/>
        </authorList>
    </citation>
    <scope>NUCLEOTIDE SEQUENCE [GENOMIC DNA]</scope>
    <source>
        <strain>972 / ATCC 24843</strain>
    </source>
</reference>
<reference key="2">
    <citation type="journal article" date="2002" name="Nature">
        <title>The genome sequence of Schizosaccharomyces pombe.</title>
        <authorList>
            <person name="Wood V."/>
            <person name="Gwilliam R."/>
            <person name="Rajandream M.A."/>
            <person name="Lyne M.H."/>
            <person name="Lyne R."/>
            <person name="Stewart A."/>
            <person name="Sgouros J.G."/>
            <person name="Peat N."/>
            <person name="Hayles J."/>
            <person name="Baker S.G."/>
            <person name="Basham D."/>
            <person name="Bowman S."/>
            <person name="Brooks K."/>
            <person name="Brown D."/>
            <person name="Brown S."/>
            <person name="Chillingworth T."/>
            <person name="Churcher C.M."/>
            <person name="Collins M."/>
            <person name="Connor R."/>
            <person name="Cronin A."/>
            <person name="Davis P."/>
            <person name="Feltwell T."/>
            <person name="Fraser A."/>
            <person name="Gentles S."/>
            <person name="Goble A."/>
            <person name="Hamlin N."/>
            <person name="Harris D.E."/>
            <person name="Hidalgo J."/>
            <person name="Hodgson G."/>
            <person name="Holroyd S."/>
            <person name="Hornsby T."/>
            <person name="Howarth S."/>
            <person name="Huckle E.J."/>
            <person name="Hunt S."/>
            <person name="Jagels K."/>
            <person name="James K.D."/>
            <person name="Jones L."/>
            <person name="Jones M."/>
            <person name="Leather S."/>
            <person name="McDonald S."/>
            <person name="McLean J."/>
            <person name="Mooney P."/>
            <person name="Moule S."/>
            <person name="Mungall K.L."/>
            <person name="Murphy L.D."/>
            <person name="Niblett D."/>
            <person name="Odell C."/>
            <person name="Oliver K."/>
            <person name="O'Neil S."/>
            <person name="Pearson D."/>
            <person name="Quail M.A."/>
            <person name="Rabbinowitsch E."/>
            <person name="Rutherford K.M."/>
            <person name="Rutter S."/>
            <person name="Saunders D."/>
            <person name="Seeger K."/>
            <person name="Sharp S."/>
            <person name="Skelton J."/>
            <person name="Simmonds M.N."/>
            <person name="Squares R."/>
            <person name="Squares S."/>
            <person name="Stevens K."/>
            <person name="Taylor K."/>
            <person name="Taylor R.G."/>
            <person name="Tivey A."/>
            <person name="Walsh S.V."/>
            <person name="Warren T."/>
            <person name="Whitehead S."/>
            <person name="Woodward J.R."/>
            <person name="Volckaert G."/>
            <person name="Aert R."/>
            <person name="Robben J."/>
            <person name="Grymonprez B."/>
            <person name="Weltjens I."/>
            <person name="Vanstreels E."/>
            <person name="Rieger M."/>
            <person name="Schaefer M."/>
            <person name="Mueller-Auer S."/>
            <person name="Gabel C."/>
            <person name="Fuchs M."/>
            <person name="Duesterhoeft A."/>
            <person name="Fritzc C."/>
            <person name="Holzer E."/>
            <person name="Moestl D."/>
            <person name="Hilbert H."/>
            <person name="Borzym K."/>
            <person name="Langer I."/>
            <person name="Beck A."/>
            <person name="Lehrach H."/>
            <person name="Reinhardt R."/>
            <person name="Pohl T.M."/>
            <person name="Eger P."/>
            <person name="Zimmermann W."/>
            <person name="Wedler H."/>
            <person name="Wambutt R."/>
            <person name="Purnelle B."/>
            <person name="Goffeau A."/>
            <person name="Cadieu E."/>
            <person name="Dreano S."/>
            <person name="Gloux S."/>
            <person name="Lelaure V."/>
            <person name="Mottier S."/>
            <person name="Galibert F."/>
            <person name="Aves S.J."/>
            <person name="Xiang Z."/>
            <person name="Hunt C."/>
            <person name="Moore K."/>
            <person name="Hurst S.M."/>
            <person name="Lucas M."/>
            <person name="Rochet M."/>
            <person name="Gaillardin C."/>
            <person name="Tallada V.A."/>
            <person name="Garzon A."/>
            <person name="Thode G."/>
            <person name="Daga R.R."/>
            <person name="Cruzado L."/>
            <person name="Jimenez J."/>
            <person name="Sanchez M."/>
            <person name="del Rey F."/>
            <person name="Benito J."/>
            <person name="Dominguez A."/>
            <person name="Revuelta J.L."/>
            <person name="Moreno S."/>
            <person name="Armstrong J."/>
            <person name="Forsburg S.L."/>
            <person name="Cerutti L."/>
            <person name="Lowe T."/>
            <person name="McCombie W.R."/>
            <person name="Paulsen I."/>
            <person name="Potashkin J."/>
            <person name="Shpakovski G.V."/>
            <person name="Ussery D."/>
            <person name="Barrell B.G."/>
            <person name="Nurse P."/>
        </authorList>
    </citation>
    <scope>NUCLEOTIDE SEQUENCE [LARGE SCALE GENOMIC DNA]</scope>
    <source>
        <strain>972 / ATCC 24843</strain>
    </source>
</reference>
<accession>O74456</accession>
<comment type="catalytic activity">
    <reaction>
        <text>L-seryl-[protein] + ATP = O-phospho-L-seryl-[protein] + ADP + H(+)</text>
        <dbReference type="Rhea" id="RHEA:17989"/>
        <dbReference type="Rhea" id="RHEA-COMP:9863"/>
        <dbReference type="Rhea" id="RHEA-COMP:11604"/>
        <dbReference type="ChEBI" id="CHEBI:15378"/>
        <dbReference type="ChEBI" id="CHEBI:29999"/>
        <dbReference type="ChEBI" id="CHEBI:30616"/>
        <dbReference type="ChEBI" id="CHEBI:83421"/>
        <dbReference type="ChEBI" id="CHEBI:456216"/>
        <dbReference type="EC" id="2.7.11.22"/>
    </reaction>
</comment>
<comment type="catalytic activity">
    <reaction>
        <text>L-threonyl-[protein] + ATP = O-phospho-L-threonyl-[protein] + ADP + H(+)</text>
        <dbReference type="Rhea" id="RHEA:46608"/>
        <dbReference type="Rhea" id="RHEA-COMP:11060"/>
        <dbReference type="Rhea" id="RHEA-COMP:11605"/>
        <dbReference type="ChEBI" id="CHEBI:15378"/>
        <dbReference type="ChEBI" id="CHEBI:30013"/>
        <dbReference type="ChEBI" id="CHEBI:30616"/>
        <dbReference type="ChEBI" id="CHEBI:61977"/>
        <dbReference type="ChEBI" id="CHEBI:456216"/>
        <dbReference type="EC" id="2.7.11.22"/>
    </reaction>
</comment>
<comment type="subunit">
    <text>Interacts with the pas1 cyclin.</text>
</comment>
<comment type="similarity">
    <text evidence="4">Belongs to the protein kinase superfamily. CMGC Ser/Thr protein kinase family. CDC2/CDKX subfamily.</text>
</comment>
<evidence type="ECO:0000250" key="1"/>
<evidence type="ECO:0000255" key="2">
    <source>
        <dbReference type="PROSITE-ProRule" id="PRU00159"/>
    </source>
</evidence>
<evidence type="ECO:0000255" key="3">
    <source>
        <dbReference type="PROSITE-ProRule" id="PRU10027"/>
    </source>
</evidence>
<evidence type="ECO:0000305" key="4"/>
<dbReference type="EC" id="2.7.11.22"/>
<dbReference type="EMBL" id="CU329672">
    <property type="protein sequence ID" value="CAA20750.1"/>
    <property type="molecule type" value="Genomic_DNA"/>
</dbReference>
<dbReference type="EMBL" id="AB045127">
    <property type="protein sequence ID" value="BAB16402.1"/>
    <property type="molecule type" value="Genomic_DNA"/>
</dbReference>
<dbReference type="PIR" id="T41101">
    <property type="entry name" value="T41101"/>
</dbReference>
<dbReference type="RefSeq" id="NP_587921.1">
    <property type="nucleotide sequence ID" value="NM_001022912.1"/>
</dbReference>
<dbReference type="SMR" id="O74456"/>
<dbReference type="BioGRID" id="275932">
    <property type="interactions" value="444"/>
</dbReference>
<dbReference type="FunCoup" id="O74456">
    <property type="interactions" value="390"/>
</dbReference>
<dbReference type="STRING" id="284812.O74456"/>
<dbReference type="iPTMnet" id="O74456"/>
<dbReference type="PaxDb" id="4896-SPCC16C4.11.1"/>
<dbReference type="EnsemblFungi" id="SPCC16C4.11.1">
    <property type="protein sequence ID" value="SPCC16C4.11.1:pep"/>
    <property type="gene ID" value="SPCC16C4.11"/>
</dbReference>
<dbReference type="GeneID" id="2539366"/>
<dbReference type="KEGG" id="spo:2539366"/>
<dbReference type="PomBase" id="SPCC16C4.11">
    <property type="gene designation" value="pef1"/>
</dbReference>
<dbReference type="VEuPathDB" id="FungiDB:SPCC16C4.11"/>
<dbReference type="eggNOG" id="KOG0594">
    <property type="taxonomic scope" value="Eukaryota"/>
</dbReference>
<dbReference type="HOGENOM" id="CLU_000288_181_1_1"/>
<dbReference type="InParanoid" id="O74456"/>
<dbReference type="OMA" id="HCHENRI"/>
<dbReference type="PhylomeDB" id="O74456"/>
<dbReference type="BRENDA" id="2.7.11.22">
    <property type="organism ID" value="5613"/>
</dbReference>
<dbReference type="PRO" id="PR:O74456"/>
<dbReference type="Proteomes" id="UP000002485">
    <property type="component" value="Chromosome III"/>
</dbReference>
<dbReference type="GO" id="GO:0042764">
    <property type="term" value="C:ascospore-type prospore"/>
    <property type="evidence" value="ECO:0000314"/>
    <property type="project" value="PomBase"/>
</dbReference>
<dbReference type="GO" id="GO:0005737">
    <property type="term" value="C:cytoplasm"/>
    <property type="evidence" value="ECO:0000318"/>
    <property type="project" value="GO_Central"/>
</dbReference>
<dbReference type="GO" id="GO:0005829">
    <property type="term" value="C:cytosol"/>
    <property type="evidence" value="ECO:0007005"/>
    <property type="project" value="PomBase"/>
</dbReference>
<dbReference type="GO" id="GO:0005634">
    <property type="term" value="C:nucleus"/>
    <property type="evidence" value="ECO:0000353"/>
    <property type="project" value="PomBase"/>
</dbReference>
<dbReference type="GO" id="GO:0005524">
    <property type="term" value="F:ATP binding"/>
    <property type="evidence" value="ECO:0007669"/>
    <property type="project" value="UniProtKB-KW"/>
</dbReference>
<dbReference type="GO" id="GO:0004693">
    <property type="term" value="F:cyclin-dependent protein serine/threonine kinase activity"/>
    <property type="evidence" value="ECO:0000269"/>
    <property type="project" value="PomBase"/>
</dbReference>
<dbReference type="GO" id="GO:0106310">
    <property type="term" value="F:protein serine kinase activity"/>
    <property type="evidence" value="ECO:0007669"/>
    <property type="project" value="RHEA"/>
</dbReference>
<dbReference type="GO" id="GO:0045875">
    <property type="term" value="P:negative regulation of sister chromatid cohesion"/>
    <property type="evidence" value="ECO:0000269"/>
    <property type="project" value="PomBase"/>
</dbReference>
<dbReference type="GO" id="GO:1901987">
    <property type="term" value="P:regulation of cell cycle phase transition"/>
    <property type="evidence" value="ECO:0000318"/>
    <property type="project" value="GO_Central"/>
</dbReference>
<dbReference type="GO" id="GO:0007165">
    <property type="term" value="P:signal transduction"/>
    <property type="evidence" value="ECO:0000305"/>
    <property type="project" value="PomBase"/>
</dbReference>
<dbReference type="GO" id="GO:0007089">
    <property type="term" value="P:traversing start control point of mitotic cell cycle"/>
    <property type="evidence" value="ECO:0000316"/>
    <property type="project" value="PomBase"/>
</dbReference>
<dbReference type="FunFam" id="3.30.200.20:FF:000599">
    <property type="entry name" value="Cyclin-dependent kinase 2"/>
    <property type="match status" value="1"/>
</dbReference>
<dbReference type="FunFam" id="1.10.510.10:FF:000410">
    <property type="entry name" value="Probable PHO85-cyclin-dependent protein kinase"/>
    <property type="match status" value="1"/>
</dbReference>
<dbReference type="Gene3D" id="3.30.200.20">
    <property type="entry name" value="Phosphorylase Kinase, domain 1"/>
    <property type="match status" value="1"/>
</dbReference>
<dbReference type="Gene3D" id="1.10.510.10">
    <property type="entry name" value="Transferase(Phosphotransferase) domain 1"/>
    <property type="match status" value="1"/>
</dbReference>
<dbReference type="InterPro" id="IPR050108">
    <property type="entry name" value="CDK"/>
</dbReference>
<dbReference type="InterPro" id="IPR011009">
    <property type="entry name" value="Kinase-like_dom_sf"/>
</dbReference>
<dbReference type="InterPro" id="IPR000719">
    <property type="entry name" value="Prot_kinase_dom"/>
</dbReference>
<dbReference type="InterPro" id="IPR017441">
    <property type="entry name" value="Protein_kinase_ATP_BS"/>
</dbReference>
<dbReference type="InterPro" id="IPR008271">
    <property type="entry name" value="Ser/Thr_kinase_AS"/>
</dbReference>
<dbReference type="PANTHER" id="PTHR24056">
    <property type="entry name" value="CELL DIVISION PROTEIN KINASE"/>
    <property type="match status" value="1"/>
</dbReference>
<dbReference type="PANTHER" id="PTHR24056:SF46">
    <property type="entry name" value="CYCLIN-DEPENDENT KINASE 5"/>
    <property type="match status" value="1"/>
</dbReference>
<dbReference type="Pfam" id="PF00069">
    <property type="entry name" value="Pkinase"/>
    <property type="match status" value="1"/>
</dbReference>
<dbReference type="SMART" id="SM00220">
    <property type="entry name" value="S_TKc"/>
    <property type="match status" value="1"/>
</dbReference>
<dbReference type="SUPFAM" id="SSF56112">
    <property type="entry name" value="Protein kinase-like (PK-like)"/>
    <property type="match status" value="1"/>
</dbReference>
<dbReference type="PROSITE" id="PS00107">
    <property type="entry name" value="PROTEIN_KINASE_ATP"/>
    <property type="match status" value="1"/>
</dbReference>
<dbReference type="PROSITE" id="PS50011">
    <property type="entry name" value="PROTEIN_KINASE_DOM"/>
    <property type="match status" value="1"/>
</dbReference>
<dbReference type="PROSITE" id="PS00108">
    <property type="entry name" value="PROTEIN_KINASE_ST"/>
    <property type="match status" value="1"/>
</dbReference>
<keyword id="KW-0067">ATP-binding</keyword>
<keyword id="KW-0418">Kinase</keyword>
<keyword id="KW-0547">Nucleotide-binding</keyword>
<keyword id="KW-0597">Phosphoprotein</keyword>
<keyword id="KW-1185">Reference proteome</keyword>
<keyword id="KW-0723">Serine/threonine-protein kinase</keyword>
<keyword id="KW-0808">Transferase</keyword>
<protein>
    <recommendedName>
        <fullName>Serine/threonine-protein kinase pef1</fullName>
        <ecNumber>2.7.11.22</ecNumber>
    </recommendedName>
    <alternativeName>
        <fullName>Cyclin-dependent kinase pef1</fullName>
    </alternativeName>
    <alternativeName>
        <fullName>PHO85 homolog</fullName>
    </alternativeName>
</protein>
<name>PEF1_SCHPO</name>
<organism>
    <name type="scientific">Schizosaccharomyces pombe (strain 972 / ATCC 24843)</name>
    <name type="common">Fission yeast</name>
    <dbReference type="NCBI Taxonomy" id="284812"/>
    <lineage>
        <taxon>Eukaryota</taxon>
        <taxon>Fungi</taxon>
        <taxon>Dikarya</taxon>
        <taxon>Ascomycota</taxon>
        <taxon>Taphrinomycotina</taxon>
        <taxon>Schizosaccharomycetes</taxon>
        <taxon>Schizosaccharomycetales</taxon>
        <taxon>Schizosaccharomycetaceae</taxon>
        <taxon>Schizosaccharomyces</taxon>
    </lineage>
</organism>
<feature type="chain" id="PRO_0000086505" description="Serine/threonine-protein kinase pef1">
    <location>
        <begin position="1"/>
        <end position="288"/>
    </location>
</feature>
<feature type="domain" description="Protein kinase" evidence="2">
    <location>
        <begin position="3"/>
        <end position="285"/>
    </location>
</feature>
<feature type="active site" description="Proton acceptor" evidence="2 3">
    <location>
        <position position="126"/>
    </location>
</feature>
<feature type="binding site" evidence="2">
    <location>
        <begin position="9"/>
        <end position="17"/>
    </location>
    <ligand>
        <name>ATP</name>
        <dbReference type="ChEBI" id="CHEBI:30616"/>
    </ligand>
</feature>
<feature type="binding site" evidence="2">
    <location>
        <position position="32"/>
    </location>
    <ligand>
        <name>ATP</name>
        <dbReference type="ChEBI" id="CHEBI:30616"/>
    </ligand>
</feature>
<feature type="modified residue" description="Phosphothreonine" evidence="1">
    <location>
        <position position="13"/>
    </location>
</feature>
<feature type="modified residue" description="Phosphotyrosine" evidence="1">
    <location>
        <position position="14"/>
    </location>
</feature>
<gene>
    <name type="primary">pef1</name>
    <name type="ORF">SPCC16C4.11</name>
</gene>
<sequence length="288" mass="32737">MNYQRLEKLGEGTYAHVYKGQNRVTGEIVALKVIRIDADEGTPSTAIREISLMKELRHPNIMSLSDVLQTENKLMLVFEYMEKDLKKYMDTYGNQGALPPSQVKNFTQQLLKGISFCHENRVLHRDLKPQNLLINSRGELKLADFGLARSIGIPVNTFSNEVVTLWYRAPDVLLGSRVYSTSIDIWSVGCIMAEMATGRPLFAGSNNEDQLLKIFRLLGTPTEQSWPGISLLPEYKPTFPIYKAQDLAYLFPTFDPLGLDLLRRMLRLQPELRTTGQDALQHAWFLTA</sequence>
<proteinExistence type="inferred from homology"/>